<organism>
    <name type="scientific">Botryotinia fuckeliana (strain B05.10)</name>
    <name type="common">Noble rot fungus</name>
    <name type="synonym">Botrytis cinerea</name>
    <dbReference type="NCBI Taxonomy" id="332648"/>
    <lineage>
        <taxon>Eukaryota</taxon>
        <taxon>Fungi</taxon>
        <taxon>Dikarya</taxon>
        <taxon>Ascomycota</taxon>
        <taxon>Pezizomycotina</taxon>
        <taxon>Leotiomycetes</taxon>
        <taxon>Helotiales</taxon>
        <taxon>Sclerotiniaceae</taxon>
        <taxon>Botrytis</taxon>
    </lineage>
</organism>
<dbReference type="EC" id="3.6.4.13" evidence="1"/>
<dbReference type="EMBL" id="CP009815">
    <property type="protein sequence ID" value="ATZ55005.1"/>
    <property type="molecule type" value="Genomic_DNA"/>
</dbReference>
<dbReference type="SMR" id="A6RW56"/>
<dbReference type="EnsemblFungi" id="Bcin11g03140.1">
    <property type="protein sequence ID" value="Bcin11p03140.1"/>
    <property type="gene ID" value="Bcin11g03140"/>
</dbReference>
<dbReference type="GeneID" id="5437409"/>
<dbReference type="KEGG" id="bfu:BCIN_11g03140"/>
<dbReference type="VEuPathDB" id="FungiDB:Bcin11g03140"/>
<dbReference type="OMA" id="GIGIKCC"/>
<dbReference type="OrthoDB" id="10261904at2759"/>
<dbReference type="Proteomes" id="UP000001798">
    <property type="component" value="Chromosome bcin11"/>
</dbReference>
<dbReference type="GO" id="GO:0005829">
    <property type="term" value="C:cytosol"/>
    <property type="evidence" value="ECO:0007669"/>
    <property type="project" value="TreeGrafter"/>
</dbReference>
<dbReference type="GO" id="GO:0005634">
    <property type="term" value="C:nucleus"/>
    <property type="evidence" value="ECO:0007669"/>
    <property type="project" value="UniProtKB-SubCell"/>
</dbReference>
<dbReference type="GO" id="GO:0005524">
    <property type="term" value="F:ATP binding"/>
    <property type="evidence" value="ECO:0007669"/>
    <property type="project" value="UniProtKB-KW"/>
</dbReference>
<dbReference type="GO" id="GO:0016887">
    <property type="term" value="F:ATP hydrolysis activity"/>
    <property type="evidence" value="ECO:0007669"/>
    <property type="project" value="RHEA"/>
</dbReference>
<dbReference type="GO" id="GO:0003723">
    <property type="term" value="F:RNA binding"/>
    <property type="evidence" value="ECO:0007669"/>
    <property type="project" value="UniProtKB-KW"/>
</dbReference>
<dbReference type="GO" id="GO:0003724">
    <property type="term" value="F:RNA helicase activity"/>
    <property type="evidence" value="ECO:0007669"/>
    <property type="project" value="UniProtKB-EC"/>
</dbReference>
<dbReference type="GO" id="GO:0006364">
    <property type="term" value="P:rRNA processing"/>
    <property type="evidence" value="ECO:0007669"/>
    <property type="project" value="UniProtKB-KW"/>
</dbReference>
<dbReference type="CDD" id="cd17954">
    <property type="entry name" value="DEADc_DDX47"/>
    <property type="match status" value="1"/>
</dbReference>
<dbReference type="CDD" id="cd18787">
    <property type="entry name" value="SF2_C_DEAD"/>
    <property type="match status" value="1"/>
</dbReference>
<dbReference type="Gene3D" id="3.40.50.300">
    <property type="entry name" value="P-loop containing nucleotide triphosphate hydrolases"/>
    <property type="match status" value="2"/>
</dbReference>
<dbReference type="InterPro" id="IPR044765">
    <property type="entry name" value="DDX47/Rrp3_DEADc"/>
</dbReference>
<dbReference type="InterPro" id="IPR011545">
    <property type="entry name" value="DEAD/DEAH_box_helicase_dom"/>
</dbReference>
<dbReference type="InterPro" id="IPR050079">
    <property type="entry name" value="DEAD_box_RNA_helicase"/>
</dbReference>
<dbReference type="InterPro" id="IPR014001">
    <property type="entry name" value="Helicase_ATP-bd"/>
</dbReference>
<dbReference type="InterPro" id="IPR001650">
    <property type="entry name" value="Helicase_C-like"/>
</dbReference>
<dbReference type="InterPro" id="IPR027417">
    <property type="entry name" value="P-loop_NTPase"/>
</dbReference>
<dbReference type="InterPro" id="IPR000629">
    <property type="entry name" value="RNA-helicase_DEAD-box_CS"/>
</dbReference>
<dbReference type="InterPro" id="IPR014014">
    <property type="entry name" value="RNA_helicase_DEAD_Q_motif"/>
</dbReference>
<dbReference type="PANTHER" id="PTHR47959">
    <property type="entry name" value="ATP-DEPENDENT RNA HELICASE RHLE-RELATED"/>
    <property type="match status" value="1"/>
</dbReference>
<dbReference type="PANTHER" id="PTHR47959:SF20">
    <property type="entry name" value="RNA HELICASE"/>
    <property type="match status" value="1"/>
</dbReference>
<dbReference type="Pfam" id="PF00270">
    <property type="entry name" value="DEAD"/>
    <property type="match status" value="1"/>
</dbReference>
<dbReference type="Pfam" id="PF00271">
    <property type="entry name" value="Helicase_C"/>
    <property type="match status" value="1"/>
</dbReference>
<dbReference type="SMART" id="SM00487">
    <property type="entry name" value="DEXDc"/>
    <property type="match status" value="1"/>
</dbReference>
<dbReference type="SMART" id="SM00490">
    <property type="entry name" value="HELICc"/>
    <property type="match status" value="1"/>
</dbReference>
<dbReference type="SUPFAM" id="SSF52540">
    <property type="entry name" value="P-loop containing nucleoside triphosphate hydrolases"/>
    <property type="match status" value="1"/>
</dbReference>
<dbReference type="PROSITE" id="PS00039">
    <property type="entry name" value="DEAD_ATP_HELICASE"/>
    <property type="match status" value="1"/>
</dbReference>
<dbReference type="PROSITE" id="PS51192">
    <property type="entry name" value="HELICASE_ATP_BIND_1"/>
    <property type="match status" value="1"/>
</dbReference>
<dbReference type="PROSITE" id="PS51194">
    <property type="entry name" value="HELICASE_CTER"/>
    <property type="match status" value="1"/>
</dbReference>
<dbReference type="PROSITE" id="PS51195">
    <property type="entry name" value="Q_MOTIF"/>
    <property type="match status" value="1"/>
</dbReference>
<name>RRP3_BOTFB</name>
<protein>
    <recommendedName>
        <fullName evidence="5">ATP-dependent rRNA helicase rrp3</fullName>
        <ecNumber evidence="1">3.6.4.13</ecNumber>
    </recommendedName>
</protein>
<comment type="function">
    <text evidence="1">ATP-dependent rRNA helicase required for pre-ribosomal RNA processing. Involved in the maturation of the 35S-pre-rRNA and to its cleavage to mature 18S rRNA.</text>
</comment>
<comment type="catalytic activity">
    <reaction evidence="1">
        <text>ATP + H2O = ADP + phosphate + H(+)</text>
        <dbReference type="Rhea" id="RHEA:13065"/>
        <dbReference type="ChEBI" id="CHEBI:15377"/>
        <dbReference type="ChEBI" id="CHEBI:15378"/>
        <dbReference type="ChEBI" id="CHEBI:30616"/>
        <dbReference type="ChEBI" id="CHEBI:43474"/>
        <dbReference type="ChEBI" id="CHEBI:456216"/>
        <dbReference type="EC" id="3.6.4.13"/>
    </reaction>
</comment>
<comment type="subunit">
    <text evidence="1">Interacts with the SSU processome.</text>
</comment>
<comment type="subcellular location">
    <subcellularLocation>
        <location evidence="5">Nucleus</location>
    </subcellularLocation>
</comment>
<comment type="domain">
    <text evidence="5">The Q motif is unique to and characteristic of the DEAD box family of RNA helicases and controls ATP binding and hydrolysis.</text>
</comment>
<comment type="similarity">
    <text evidence="5">Belongs to the DEAD box helicase family. DDX47/RRP3 subfamily.</text>
</comment>
<proteinExistence type="inferred from homology"/>
<keyword id="KW-0067">ATP-binding</keyword>
<keyword id="KW-0347">Helicase</keyword>
<keyword id="KW-0378">Hydrolase</keyword>
<keyword id="KW-0547">Nucleotide-binding</keyword>
<keyword id="KW-0539">Nucleus</keyword>
<keyword id="KW-1185">Reference proteome</keyword>
<keyword id="KW-0690">Ribosome biogenesis</keyword>
<keyword id="KW-0694">RNA-binding</keyword>
<keyword id="KW-0698">rRNA processing</keyword>
<accession>A6RW56</accession>
<accession>A0A384JWP6</accession>
<reference key="1">
    <citation type="journal article" date="2011" name="PLoS Genet.">
        <title>Genomic analysis of the necrotrophic fungal pathogens Sclerotinia sclerotiorum and Botrytis cinerea.</title>
        <authorList>
            <person name="Amselem J."/>
            <person name="Cuomo C.A."/>
            <person name="van Kan J.A.L."/>
            <person name="Viaud M."/>
            <person name="Benito E.P."/>
            <person name="Couloux A."/>
            <person name="Coutinho P.M."/>
            <person name="de Vries R.P."/>
            <person name="Dyer P.S."/>
            <person name="Fillinger S."/>
            <person name="Fournier E."/>
            <person name="Gout L."/>
            <person name="Hahn M."/>
            <person name="Kohn L."/>
            <person name="Lapalu N."/>
            <person name="Plummer K.M."/>
            <person name="Pradier J.-M."/>
            <person name="Quevillon E."/>
            <person name="Sharon A."/>
            <person name="Simon A."/>
            <person name="ten Have A."/>
            <person name="Tudzynski B."/>
            <person name="Tudzynski P."/>
            <person name="Wincker P."/>
            <person name="Andrew M."/>
            <person name="Anthouard V."/>
            <person name="Beever R.E."/>
            <person name="Beffa R."/>
            <person name="Benoit I."/>
            <person name="Bouzid O."/>
            <person name="Brault B."/>
            <person name="Chen Z."/>
            <person name="Choquer M."/>
            <person name="Collemare J."/>
            <person name="Cotton P."/>
            <person name="Danchin E.G."/>
            <person name="Da Silva C."/>
            <person name="Gautier A."/>
            <person name="Giraud C."/>
            <person name="Giraud T."/>
            <person name="Gonzalez C."/>
            <person name="Grossetete S."/>
            <person name="Gueldener U."/>
            <person name="Henrissat B."/>
            <person name="Howlett B.J."/>
            <person name="Kodira C."/>
            <person name="Kretschmer M."/>
            <person name="Lappartient A."/>
            <person name="Leroch M."/>
            <person name="Levis C."/>
            <person name="Mauceli E."/>
            <person name="Neuveglise C."/>
            <person name="Oeser B."/>
            <person name="Pearson M."/>
            <person name="Poulain J."/>
            <person name="Poussereau N."/>
            <person name="Quesneville H."/>
            <person name="Rascle C."/>
            <person name="Schumacher J."/>
            <person name="Segurens B."/>
            <person name="Sexton A."/>
            <person name="Silva E."/>
            <person name="Sirven C."/>
            <person name="Soanes D.M."/>
            <person name="Talbot N.J."/>
            <person name="Templeton M."/>
            <person name="Yandava C."/>
            <person name="Yarden O."/>
            <person name="Zeng Q."/>
            <person name="Rollins J.A."/>
            <person name="Lebrun M.-H."/>
            <person name="Dickman M."/>
        </authorList>
    </citation>
    <scope>NUCLEOTIDE SEQUENCE [LARGE SCALE GENOMIC DNA]</scope>
    <source>
        <strain>B05.10</strain>
    </source>
</reference>
<reference key="2">
    <citation type="journal article" date="2012" name="Eukaryot. Cell">
        <title>Genome update of Botrytis cinerea strains B05.10 and T4.</title>
        <authorList>
            <person name="Staats M."/>
            <person name="van Kan J.A.L."/>
        </authorList>
    </citation>
    <scope>NUCLEOTIDE SEQUENCE [LARGE SCALE GENOMIC DNA]</scope>
    <scope>GENOME REANNOTATION</scope>
    <source>
        <strain>B05.10</strain>
    </source>
</reference>
<reference key="3">
    <citation type="journal article" date="2017" name="Mol. Plant Pathol.">
        <title>A gapless genome sequence of the fungus Botrytis cinerea.</title>
        <authorList>
            <person name="van Kan J.A.L."/>
            <person name="Stassen J.H.M."/>
            <person name="Mosbach A."/>
            <person name="van der Lee T.A.J."/>
            <person name="Faino L."/>
            <person name="Farmer A.D."/>
            <person name="Papasotiriou D.G."/>
            <person name="Zhou S."/>
            <person name="Seidl M.F."/>
            <person name="Cottam E."/>
            <person name="Edel D."/>
            <person name="Hahn M."/>
            <person name="Schwartz D.C."/>
            <person name="Dietrich R.A."/>
            <person name="Widdison S."/>
            <person name="Scalliet G."/>
        </authorList>
    </citation>
    <scope>NUCLEOTIDE SEQUENCE [LARGE SCALE GENOMIC DNA]</scope>
    <scope>GENOME REANNOTATION</scope>
    <source>
        <strain>B05.10</strain>
    </source>
</reference>
<sequence>MSSVKRRKTDKNPSLEGLKSKKTKESKKESHTPSPEPIEDTEDNRVIEETEEAEEDDAPKSFKDLGIVDSLCEACDTLGYKAPTPIQRESIPLALQGRDLIGLAETGSGKTAAFALPILQALLDKPQPLFGLVLAPTRELAYQISQQFEALGSVIRVKCAVIVGGMDMVPQSIALGKKPHIIVATPGRLLDHLENTKGFSLRSLKYLVMDEADRLLDLDFGPILDKILKVLPRERRTYLFSATISSKVESLQRASLKDPLRVSISSNKYQTVSTLIQNYIFIPLIHKDTYLIYLLNEFAGQSAIIFTRTVNETQRIAILLRTLGFGAIPLHGQLSQSSRLGALNKFRAGSREILVATDVAARGLDIPSVDVVLNYDVPQDSKTYIHRVGRTARAGKSGHAISVVTQYDLEIFMRIEAALGKKQVEYPTVKDEVMVFKPRVEEAQRHARNEMKNLHEDRGKKGAVLKGRRPANGAKRGRDEMDREEG</sequence>
<gene>
    <name evidence="1" type="primary">rrp3</name>
    <name type="ORF">BC1G_04843</name>
    <name type="ORF">BCIN_11g03140</name>
</gene>
<evidence type="ECO:0000250" key="1">
    <source>
        <dbReference type="UniProtKB" id="P38712"/>
    </source>
</evidence>
<evidence type="ECO:0000255" key="2">
    <source>
        <dbReference type="PROSITE-ProRule" id="PRU00541"/>
    </source>
</evidence>
<evidence type="ECO:0000255" key="3">
    <source>
        <dbReference type="PROSITE-ProRule" id="PRU00542"/>
    </source>
</evidence>
<evidence type="ECO:0000256" key="4">
    <source>
        <dbReference type="SAM" id="MobiDB-lite"/>
    </source>
</evidence>
<evidence type="ECO:0000305" key="5"/>
<feature type="chain" id="PRO_0000310231" description="ATP-dependent rRNA helicase rrp3">
    <location>
        <begin position="1"/>
        <end position="486"/>
    </location>
</feature>
<feature type="domain" description="Helicase ATP-binding" evidence="2">
    <location>
        <begin position="91"/>
        <end position="262"/>
    </location>
</feature>
<feature type="domain" description="Helicase C-terminal" evidence="3">
    <location>
        <begin position="286"/>
        <end position="434"/>
    </location>
</feature>
<feature type="region of interest" description="Disordered" evidence="4">
    <location>
        <begin position="1"/>
        <end position="60"/>
    </location>
</feature>
<feature type="region of interest" description="Disordered" evidence="4">
    <location>
        <begin position="447"/>
        <end position="486"/>
    </location>
</feature>
<feature type="short sequence motif" description="Q motif" evidence="5">
    <location>
        <begin position="60"/>
        <end position="88"/>
    </location>
</feature>
<feature type="short sequence motif" description="DEAD box" evidence="5">
    <location>
        <begin position="210"/>
        <end position="213"/>
    </location>
</feature>
<feature type="compositionally biased region" description="Basic and acidic residues" evidence="4">
    <location>
        <begin position="447"/>
        <end position="460"/>
    </location>
</feature>
<feature type="compositionally biased region" description="Basic and acidic residues" evidence="4">
    <location>
        <begin position="476"/>
        <end position="486"/>
    </location>
</feature>
<feature type="binding site" evidence="2">
    <location>
        <begin position="104"/>
        <end position="111"/>
    </location>
    <ligand>
        <name>ATP</name>
        <dbReference type="ChEBI" id="CHEBI:30616"/>
    </ligand>
</feature>